<name>LAB_DROME</name>
<keyword id="KW-0025">Alternative splicing</keyword>
<keyword id="KW-0217">Developmental protein</keyword>
<keyword id="KW-0238">DNA-binding</keyword>
<keyword id="KW-0371">Homeobox</keyword>
<keyword id="KW-0539">Nucleus</keyword>
<keyword id="KW-1185">Reference proteome</keyword>
<keyword id="KW-0804">Transcription</keyword>
<keyword id="KW-0805">Transcription regulation</keyword>
<organism>
    <name type="scientific">Drosophila melanogaster</name>
    <name type="common">Fruit fly</name>
    <dbReference type="NCBI Taxonomy" id="7227"/>
    <lineage>
        <taxon>Eukaryota</taxon>
        <taxon>Metazoa</taxon>
        <taxon>Ecdysozoa</taxon>
        <taxon>Arthropoda</taxon>
        <taxon>Hexapoda</taxon>
        <taxon>Insecta</taxon>
        <taxon>Pterygota</taxon>
        <taxon>Neoptera</taxon>
        <taxon>Endopterygota</taxon>
        <taxon>Diptera</taxon>
        <taxon>Brachycera</taxon>
        <taxon>Muscomorpha</taxon>
        <taxon>Ephydroidea</taxon>
        <taxon>Drosophilidae</taxon>
        <taxon>Drosophila</taxon>
        <taxon>Sophophora</taxon>
    </lineage>
</organism>
<comment type="function">
    <text>Sequence-specific transcription factor which is part of a developmental regulatory system that provides cells with specific positional identities on the anterior-posterior axis. Required for proper head development.</text>
</comment>
<comment type="subcellular location">
    <subcellularLocation>
        <location>Nucleus</location>
    </subcellularLocation>
</comment>
<comment type="alternative products">
    <event type="alternative splicing"/>
    <isoform>
        <id>P10105-1</id>
        <name>Long</name>
        <sequence type="displayed"/>
    </isoform>
    <isoform>
        <id>P10105-2</id>
        <name>Short</name>
        <sequence type="described" ref="VSP_002397"/>
    </isoform>
</comment>
<comment type="tissue specificity">
    <text evidence="3 4">During embryogenesis, expressed in mandibular lobe, hypopharyngeal organ, neural and epidermal cells of procephalic lobe, sensory cells of clypeolabrum, posterior midgut, thoracic and abdominal segments.</text>
</comment>
<comment type="developmental stage">
    <text evidence="3">Expressed both maternally and zygotically. High expression in embryos and third instar larvae, lower expression in pupae.</text>
</comment>
<comment type="similarity">
    <text evidence="6">Belongs to the Antp homeobox family. Labial subfamily.</text>
</comment>
<comment type="caution">
    <text evidence="6">It is uncertain whether Met-1, Met-2 or Met-7 is the initiator.</text>
</comment>
<accession>P10105</accession>
<accession>O97065</accession>
<sequence length="635" mass="68154">MMDVSSMYGNHPHHHHPHANAYDGYSTTTASAANASSYFAPQQHQPHLQLQQQQQHQHLQQPQQHLTYNGYESSSPGNYYPQQQAQLTPPPTSSHQVVQQHQQQQQAQQQQLYPHSHLFSPSAAEYGITTSTTTGNPGTPLHPSSHSPADSYYESDSVHSYYATAAVATVAPPSNSSPITAANASATSNTQQQQQQAAIISSENGMMYTNLDCMYPTAQAQAPVHGYAGQIEEKYAAVLHASYAPGMVLEDQDPMMQQATQSQMWHHQQHLAGSYALDAMDSLGMHAHMHHGLPHGHLGNLANNPHQQQPQVQQQQQQPHQQPQHPQNQSPAAHQQHHQNSVSPNGGMNRQQRGGVISPGSSTSSSTSASNGAHPASTQSKSPNHSSSIPTYKWMQLKRNVPKPQAPSYLPAPKLPASGIASMHDYQMNGQLDMCRGGGGGGSGVGNGPVGVGGNGSPGIGGVLSVQNSLIMANSAAAAGSAHPNGMGVGLGSGSGLSSCSLSSNTNNSGRTNFTNKQLTELEKEFHFNRYLTRARRIEIANTLQLNETQVKIWFQNRRMKQKKRVKEGLIPADILTQHSTSVISEKPPQQQQPQPPELQLKSQGSDLGGNELATGAPSTPTTAMTLTAPTSKQS</sequence>
<gene>
    <name type="primary">lab</name>
    <name type="ORF">CG1264</name>
</gene>
<dbReference type="EMBL" id="X13103">
    <property type="protein sequence ID" value="CAA31495.1"/>
    <property type="molecule type" value="mRNA"/>
</dbReference>
<dbReference type="EMBL" id="X13104">
    <property type="protein sequence ID" value="CAB57786.1"/>
    <property type="molecule type" value="Genomic_DNA"/>
</dbReference>
<dbReference type="EMBL" id="X13105">
    <property type="protein sequence ID" value="CAB57786.1"/>
    <property type="status" value="JOINED"/>
    <property type="molecule type" value="Genomic_DNA"/>
</dbReference>
<dbReference type="EMBL" id="X13106">
    <property type="protein sequence ID" value="CAB57786.1"/>
    <property type="status" value="JOINED"/>
    <property type="molecule type" value="Genomic_DNA"/>
</dbReference>
<dbReference type="EMBL" id="X13104">
    <property type="protein sequence ID" value="CAB57787.1"/>
    <property type="molecule type" value="Genomic_DNA"/>
</dbReference>
<dbReference type="EMBL" id="X13105">
    <property type="protein sequence ID" value="CAB57787.1"/>
    <property type="status" value="JOINED"/>
    <property type="molecule type" value="Genomic_DNA"/>
</dbReference>
<dbReference type="EMBL" id="X13106">
    <property type="protein sequence ID" value="CAB57787.1"/>
    <property type="status" value="JOINED"/>
    <property type="molecule type" value="Genomic_DNA"/>
</dbReference>
<dbReference type="EMBL" id="AE001572">
    <property type="protein sequence ID" value="AAD19811.1"/>
    <property type="molecule type" value="Genomic_DNA"/>
</dbReference>
<dbReference type="EMBL" id="AE014297">
    <property type="protein sequence ID" value="AAF54098.1"/>
    <property type="molecule type" value="Genomic_DNA"/>
</dbReference>
<dbReference type="EMBL" id="AY095089">
    <property type="protein sequence ID" value="AAM11417.1"/>
    <property type="molecule type" value="mRNA"/>
</dbReference>
<dbReference type="EMBL" id="M13570">
    <property type="protein sequence ID" value="AAA28610.1"/>
    <property type="molecule type" value="Genomic_DNA"/>
</dbReference>
<dbReference type="PIR" id="A30168">
    <property type="entry name" value="A30168"/>
</dbReference>
<dbReference type="PIR" id="S01164">
    <property type="entry name" value="S01164"/>
</dbReference>
<dbReference type="RefSeq" id="NP_476613.1">
    <molecule id="P10105-2"/>
    <property type="nucleotide sequence ID" value="NM_057265.4"/>
</dbReference>
<dbReference type="SMR" id="P10105"/>
<dbReference type="BioGRID" id="66015">
    <property type="interactions" value="11"/>
</dbReference>
<dbReference type="DIP" id="DIP-59868N"/>
<dbReference type="FunCoup" id="P10105">
    <property type="interactions" value="150"/>
</dbReference>
<dbReference type="IntAct" id="P10105">
    <property type="interactions" value="2"/>
</dbReference>
<dbReference type="STRING" id="7227.FBpp0081194"/>
<dbReference type="GlyGen" id="P10105">
    <property type="glycosylation" value="1 site"/>
</dbReference>
<dbReference type="PaxDb" id="7227-FBpp0081194"/>
<dbReference type="DNASU" id="40817"/>
<dbReference type="EnsemblMetazoa" id="FBtr0081696">
    <molecule id="P10105-2"/>
    <property type="protein sequence ID" value="FBpp0081194"/>
    <property type="gene ID" value="FBgn0002522"/>
</dbReference>
<dbReference type="GeneID" id="40817"/>
<dbReference type="KEGG" id="dme:Dmel_CG1264"/>
<dbReference type="UCSC" id="CG1264-RA">
    <molecule id="P10105-1"/>
    <property type="organism name" value="d. melanogaster"/>
</dbReference>
<dbReference type="AGR" id="FB:FBgn0002522"/>
<dbReference type="CTD" id="40817"/>
<dbReference type="FlyBase" id="FBgn0002522">
    <property type="gene designation" value="lab"/>
</dbReference>
<dbReference type="VEuPathDB" id="VectorBase:FBgn0002522"/>
<dbReference type="eggNOG" id="KOG0489">
    <property type="taxonomic scope" value="Eukaryota"/>
</dbReference>
<dbReference type="GeneTree" id="ENSGT00940000174017"/>
<dbReference type="HOGENOM" id="CLU_433673_0_0_1"/>
<dbReference type="InParanoid" id="P10105"/>
<dbReference type="OMA" id="MHAHMHH"/>
<dbReference type="OrthoDB" id="6159439at2759"/>
<dbReference type="SignaLink" id="P10105"/>
<dbReference type="BioGRID-ORCS" id="40817">
    <property type="hits" value="0 hits in 3 CRISPR screens"/>
</dbReference>
<dbReference type="GenomeRNAi" id="40817"/>
<dbReference type="PRO" id="PR:P10105"/>
<dbReference type="Proteomes" id="UP000000803">
    <property type="component" value="Chromosome 3R"/>
</dbReference>
<dbReference type="Bgee" id="FBgn0002522">
    <property type="expression patterns" value="Expressed in copper cell (Drosophila) in digestive tract and 33 other cell types or tissues"/>
</dbReference>
<dbReference type="ExpressionAtlas" id="P10105">
    <property type="expression patterns" value="baseline and differential"/>
</dbReference>
<dbReference type="GO" id="GO:0005634">
    <property type="term" value="C:nucleus"/>
    <property type="evidence" value="ECO:0000314"/>
    <property type="project" value="FlyBase"/>
</dbReference>
<dbReference type="GO" id="GO:0000987">
    <property type="term" value="F:cis-regulatory region sequence-specific DNA binding"/>
    <property type="evidence" value="ECO:0000314"/>
    <property type="project" value="FlyBase"/>
</dbReference>
<dbReference type="GO" id="GO:0000981">
    <property type="term" value="F:DNA-binding transcription factor activity, RNA polymerase II-specific"/>
    <property type="evidence" value="ECO:0007669"/>
    <property type="project" value="InterPro"/>
</dbReference>
<dbReference type="GO" id="GO:0046982">
    <property type="term" value="F:protein heterodimerization activity"/>
    <property type="evidence" value="ECO:0000353"/>
    <property type="project" value="FlyBase"/>
</dbReference>
<dbReference type="GO" id="GO:0000978">
    <property type="term" value="F:RNA polymerase II cis-regulatory region sequence-specific DNA binding"/>
    <property type="evidence" value="ECO:0000318"/>
    <property type="project" value="GO_Central"/>
</dbReference>
<dbReference type="GO" id="GO:0007420">
    <property type="term" value="P:brain development"/>
    <property type="evidence" value="ECO:0000315"/>
    <property type="project" value="FlyBase"/>
</dbReference>
<dbReference type="GO" id="GO:0035284">
    <property type="term" value="P:brain segmentation"/>
    <property type="evidence" value="ECO:0000316"/>
    <property type="project" value="FlyBase"/>
</dbReference>
<dbReference type="GO" id="GO:0030154">
    <property type="term" value="P:cell differentiation"/>
    <property type="evidence" value="ECO:0000304"/>
    <property type="project" value="FlyBase"/>
</dbReference>
<dbReference type="GO" id="GO:0001709">
    <property type="term" value="P:cell fate determination"/>
    <property type="evidence" value="ECO:0000304"/>
    <property type="project" value="FlyBase"/>
</dbReference>
<dbReference type="GO" id="GO:0060323">
    <property type="term" value="P:head morphogenesis"/>
    <property type="evidence" value="ECO:0000315"/>
    <property type="project" value="FlyBase"/>
</dbReference>
<dbReference type="GO" id="GO:0007494">
    <property type="term" value="P:midgut development"/>
    <property type="evidence" value="ECO:0000304"/>
    <property type="project" value="FlyBase"/>
</dbReference>
<dbReference type="GO" id="GO:0045944">
    <property type="term" value="P:positive regulation of transcription by RNA polymerase II"/>
    <property type="evidence" value="ECO:0000315"/>
    <property type="project" value="FlyBase"/>
</dbReference>
<dbReference type="GO" id="GO:0006357">
    <property type="term" value="P:regulation of transcription by RNA polymerase II"/>
    <property type="evidence" value="ECO:0000318"/>
    <property type="project" value="GO_Central"/>
</dbReference>
<dbReference type="CDD" id="cd00086">
    <property type="entry name" value="homeodomain"/>
    <property type="match status" value="1"/>
</dbReference>
<dbReference type="FunFam" id="1.10.10.60:FF:000113">
    <property type="entry name" value="homeobox protein Hox-B1"/>
    <property type="match status" value="1"/>
</dbReference>
<dbReference type="Gene3D" id="1.10.10.60">
    <property type="entry name" value="Homeodomain-like"/>
    <property type="match status" value="1"/>
</dbReference>
<dbReference type="InterPro" id="IPR001356">
    <property type="entry name" value="HD"/>
</dbReference>
<dbReference type="InterPro" id="IPR020479">
    <property type="entry name" value="HD_metazoa"/>
</dbReference>
<dbReference type="InterPro" id="IPR017970">
    <property type="entry name" value="Homeobox_CS"/>
</dbReference>
<dbReference type="InterPro" id="IPR009057">
    <property type="entry name" value="Homeodomain-like_sf"/>
</dbReference>
<dbReference type="InterPro" id="IPR046327">
    <property type="entry name" value="HXA1/B1/D1"/>
</dbReference>
<dbReference type="PANTHER" id="PTHR45946">
    <property type="entry name" value="HOMEOBOX PROTEIN ROUGH-RELATED"/>
    <property type="match status" value="1"/>
</dbReference>
<dbReference type="PANTHER" id="PTHR45946:SF4">
    <property type="entry name" value="HOMEOBOX PROTEIN ROUGH-RELATED"/>
    <property type="match status" value="1"/>
</dbReference>
<dbReference type="Pfam" id="PF00046">
    <property type="entry name" value="Homeodomain"/>
    <property type="match status" value="1"/>
</dbReference>
<dbReference type="PRINTS" id="PR00024">
    <property type="entry name" value="HOMEOBOX"/>
</dbReference>
<dbReference type="SMART" id="SM00389">
    <property type="entry name" value="HOX"/>
    <property type="match status" value="1"/>
</dbReference>
<dbReference type="SUPFAM" id="SSF46689">
    <property type="entry name" value="Homeodomain-like"/>
    <property type="match status" value="1"/>
</dbReference>
<dbReference type="PROSITE" id="PS00027">
    <property type="entry name" value="HOMEOBOX_1"/>
    <property type="match status" value="1"/>
</dbReference>
<dbReference type="PROSITE" id="PS50071">
    <property type="entry name" value="HOMEOBOX_2"/>
    <property type="match status" value="1"/>
</dbReference>
<protein>
    <recommendedName>
        <fullName>Homeotic protein labial</fullName>
    </recommendedName>
    <alternativeName>
        <fullName>F24</fullName>
    </alternativeName>
    <alternativeName>
        <fullName>F90-2</fullName>
    </alternativeName>
</protein>
<evidence type="ECO:0000255" key="1">
    <source>
        <dbReference type="PROSITE-ProRule" id="PRU00108"/>
    </source>
</evidence>
<evidence type="ECO:0000256" key="2">
    <source>
        <dbReference type="SAM" id="MobiDB-lite"/>
    </source>
</evidence>
<evidence type="ECO:0000269" key="3">
    <source>
    </source>
</evidence>
<evidence type="ECO:0000269" key="4">
    <source>
    </source>
</evidence>
<evidence type="ECO:0000303" key="5">
    <source>
    </source>
</evidence>
<evidence type="ECO:0000305" key="6"/>
<reference key="1">
    <citation type="journal article" date="1988" name="EMBO J.">
        <title>Molecular structure and spatial expression of a homeobox gene from the labial region of the Antennapedia-complex.</title>
        <authorList>
            <person name="Mlodzik M."/>
            <person name="Fjose A."/>
            <person name="Gehring W.J."/>
        </authorList>
    </citation>
    <scope>NUCLEOTIDE SEQUENCE [GENOMIC DNA / MRNA]</scope>
    <scope>ALTERNATIVE SPLICING</scope>
    <scope>TISSUE SPECIFICITY</scope>
    <scope>DEVELOPMENTAL STAGE</scope>
    <source>
        <strain>Oregon-R</strain>
        <tissue>Embryo</tissue>
    </source>
</reference>
<reference key="2">
    <citation type="journal article" date="1989" name="Genes Dev.">
        <title>Isolation, structure, and expression of labial, a homeotic gene of the Antennapedia Complex involved in Drosophila head development.</title>
        <authorList>
            <person name="Diederich R.J."/>
            <person name="Merrill V.K.L."/>
            <person name="Pultz M.A."/>
            <person name="Kaufman T.C."/>
        </authorList>
    </citation>
    <scope>NUCLEOTIDE SEQUENCE (ISOFORM SHORT)</scope>
    <scope>CHARACTERIZATION</scope>
    <source>
        <strain>Canton-S</strain>
        <strain>Oregon-R</strain>
        <tissue>Embryo</tissue>
    </source>
</reference>
<reference key="3">
    <citation type="submission" date="1999-01" db="EMBL/GenBank/DDBJ databases">
        <title>Complete sequence of the Antennapedia complex of Drosophila.</title>
        <authorList>
            <person name="Celniker S.E."/>
            <person name="Pfeiffer B."/>
            <person name="Knafels J."/>
            <person name="Martin C.H."/>
            <person name="Mayeda C.A."/>
            <person name="Palazzolo M.J."/>
        </authorList>
    </citation>
    <scope>NUCLEOTIDE SEQUENCE (ISOFORM SHORT)</scope>
    <source>
        <strain>Berkeley</strain>
    </source>
</reference>
<reference key="4">
    <citation type="journal article" date="2000" name="Science">
        <title>The genome sequence of Drosophila melanogaster.</title>
        <authorList>
            <person name="Adams M.D."/>
            <person name="Celniker S.E."/>
            <person name="Holt R.A."/>
            <person name="Evans C.A."/>
            <person name="Gocayne J.D."/>
            <person name="Amanatides P.G."/>
            <person name="Scherer S.E."/>
            <person name="Li P.W."/>
            <person name="Hoskins R.A."/>
            <person name="Galle R.F."/>
            <person name="George R.A."/>
            <person name="Lewis S.E."/>
            <person name="Richards S."/>
            <person name="Ashburner M."/>
            <person name="Henderson S.N."/>
            <person name="Sutton G.G."/>
            <person name="Wortman J.R."/>
            <person name="Yandell M.D."/>
            <person name="Zhang Q."/>
            <person name="Chen L.X."/>
            <person name="Brandon R.C."/>
            <person name="Rogers Y.-H.C."/>
            <person name="Blazej R.G."/>
            <person name="Champe M."/>
            <person name="Pfeiffer B.D."/>
            <person name="Wan K.H."/>
            <person name="Doyle C."/>
            <person name="Baxter E.G."/>
            <person name="Helt G."/>
            <person name="Nelson C.R."/>
            <person name="Miklos G.L.G."/>
            <person name="Abril J.F."/>
            <person name="Agbayani A."/>
            <person name="An H.-J."/>
            <person name="Andrews-Pfannkoch C."/>
            <person name="Baldwin D."/>
            <person name="Ballew R.M."/>
            <person name="Basu A."/>
            <person name="Baxendale J."/>
            <person name="Bayraktaroglu L."/>
            <person name="Beasley E.M."/>
            <person name="Beeson K.Y."/>
            <person name="Benos P.V."/>
            <person name="Berman B.P."/>
            <person name="Bhandari D."/>
            <person name="Bolshakov S."/>
            <person name="Borkova D."/>
            <person name="Botchan M.R."/>
            <person name="Bouck J."/>
            <person name="Brokstein P."/>
            <person name="Brottier P."/>
            <person name="Burtis K.C."/>
            <person name="Busam D.A."/>
            <person name="Butler H."/>
            <person name="Cadieu E."/>
            <person name="Center A."/>
            <person name="Chandra I."/>
            <person name="Cherry J.M."/>
            <person name="Cawley S."/>
            <person name="Dahlke C."/>
            <person name="Davenport L.B."/>
            <person name="Davies P."/>
            <person name="de Pablos B."/>
            <person name="Delcher A."/>
            <person name="Deng Z."/>
            <person name="Mays A.D."/>
            <person name="Dew I."/>
            <person name="Dietz S.M."/>
            <person name="Dodson K."/>
            <person name="Doup L.E."/>
            <person name="Downes M."/>
            <person name="Dugan-Rocha S."/>
            <person name="Dunkov B.C."/>
            <person name="Dunn P."/>
            <person name="Durbin K.J."/>
            <person name="Evangelista C.C."/>
            <person name="Ferraz C."/>
            <person name="Ferriera S."/>
            <person name="Fleischmann W."/>
            <person name="Fosler C."/>
            <person name="Gabrielian A.E."/>
            <person name="Garg N.S."/>
            <person name="Gelbart W.M."/>
            <person name="Glasser K."/>
            <person name="Glodek A."/>
            <person name="Gong F."/>
            <person name="Gorrell J.H."/>
            <person name="Gu Z."/>
            <person name="Guan P."/>
            <person name="Harris M."/>
            <person name="Harris N.L."/>
            <person name="Harvey D.A."/>
            <person name="Heiman T.J."/>
            <person name="Hernandez J.R."/>
            <person name="Houck J."/>
            <person name="Hostin D."/>
            <person name="Houston K.A."/>
            <person name="Howland T.J."/>
            <person name="Wei M.-H."/>
            <person name="Ibegwam C."/>
            <person name="Jalali M."/>
            <person name="Kalush F."/>
            <person name="Karpen G.H."/>
            <person name="Ke Z."/>
            <person name="Kennison J.A."/>
            <person name="Ketchum K.A."/>
            <person name="Kimmel B.E."/>
            <person name="Kodira C.D."/>
            <person name="Kraft C.L."/>
            <person name="Kravitz S."/>
            <person name="Kulp D."/>
            <person name="Lai Z."/>
            <person name="Lasko P."/>
            <person name="Lei Y."/>
            <person name="Levitsky A.A."/>
            <person name="Li J.H."/>
            <person name="Li Z."/>
            <person name="Liang Y."/>
            <person name="Lin X."/>
            <person name="Liu X."/>
            <person name="Mattei B."/>
            <person name="McIntosh T.C."/>
            <person name="McLeod M.P."/>
            <person name="McPherson D."/>
            <person name="Merkulov G."/>
            <person name="Milshina N.V."/>
            <person name="Mobarry C."/>
            <person name="Morris J."/>
            <person name="Moshrefi A."/>
            <person name="Mount S.M."/>
            <person name="Moy M."/>
            <person name="Murphy B."/>
            <person name="Murphy L."/>
            <person name="Muzny D.M."/>
            <person name="Nelson D.L."/>
            <person name="Nelson D.R."/>
            <person name="Nelson K.A."/>
            <person name="Nixon K."/>
            <person name="Nusskern D.R."/>
            <person name="Pacleb J.M."/>
            <person name="Palazzolo M."/>
            <person name="Pittman G.S."/>
            <person name="Pan S."/>
            <person name="Pollard J."/>
            <person name="Puri V."/>
            <person name="Reese M.G."/>
            <person name="Reinert K."/>
            <person name="Remington K."/>
            <person name="Saunders R.D.C."/>
            <person name="Scheeler F."/>
            <person name="Shen H."/>
            <person name="Shue B.C."/>
            <person name="Siden-Kiamos I."/>
            <person name="Simpson M."/>
            <person name="Skupski M.P."/>
            <person name="Smith T.J."/>
            <person name="Spier E."/>
            <person name="Spradling A.C."/>
            <person name="Stapleton M."/>
            <person name="Strong R."/>
            <person name="Sun E."/>
            <person name="Svirskas R."/>
            <person name="Tector C."/>
            <person name="Turner R."/>
            <person name="Venter E."/>
            <person name="Wang A.H."/>
            <person name="Wang X."/>
            <person name="Wang Z.-Y."/>
            <person name="Wassarman D.A."/>
            <person name="Weinstock G.M."/>
            <person name="Weissenbach J."/>
            <person name="Williams S.M."/>
            <person name="Woodage T."/>
            <person name="Worley K.C."/>
            <person name="Wu D."/>
            <person name="Yang S."/>
            <person name="Yao Q.A."/>
            <person name="Ye J."/>
            <person name="Yeh R.-F."/>
            <person name="Zaveri J.S."/>
            <person name="Zhan M."/>
            <person name="Zhang G."/>
            <person name="Zhao Q."/>
            <person name="Zheng L."/>
            <person name="Zheng X.H."/>
            <person name="Zhong F.N."/>
            <person name="Zhong W."/>
            <person name="Zhou X."/>
            <person name="Zhu S.C."/>
            <person name="Zhu X."/>
            <person name="Smith H.O."/>
            <person name="Gibbs R.A."/>
            <person name="Myers E.W."/>
            <person name="Rubin G.M."/>
            <person name="Venter J.C."/>
        </authorList>
    </citation>
    <scope>NUCLEOTIDE SEQUENCE [LARGE SCALE GENOMIC DNA] (ISOFORM SHORT)</scope>
    <source>
        <strain>Berkeley</strain>
    </source>
</reference>
<reference key="5">
    <citation type="journal article" date="2002" name="Genome Biol.">
        <title>Annotation of the Drosophila melanogaster euchromatic genome: a systematic review.</title>
        <authorList>
            <person name="Misra S."/>
            <person name="Crosby M.A."/>
            <person name="Mungall C.J."/>
            <person name="Matthews B.B."/>
            <person name="Campbell K.S."/>
            <person name="Hradecky P."/>
            <person name="Huang Y."/>
            <person name="Kaminker J.S."/>
            <person name="Millburn G.H."/>
            <person name="Prochnik S.E."/>
            <person name="Smith C.D."/>
            <person name="Tupy J.L."/>
            <person name="Whitfield E.J."/>
            <person name="Bayraktaroglu L."/>
            <person name="Berman B.P."/>
            <person name="Bettencourt B.R."/>
            <person name="Celniker S.E."/>
            <person name="de Grey A.D.N.J."/>
            <person name="Drysdale R.A."/>
            <person name="Harris N.L."/>
            <person name="Richter J."/>
            <person name="Russo S."/>
            <person name="Schroeder A.J."/>
            <person name="Shu S.Q."/>
            <person name="Stapleton M."/>
            <person name="Yamada C."/>
            <person name="Ashburner M."/>
            <person name="Gelbart W.M."/>
            <person name="Rubin G.M."/>
            <person name="Lewis S.E."/>
        </authorList>
    </citation>
    <scope>GENOME REANNOTATION</scope>
    <source>
        <strain>Berkeley</strain>
    </source>
</reference>
<reference key="6">
    <citation type="journal article" date="2000" name="Science">
        <title>A Drosophila complementary DNA resource.</title>
        <authorList>
            <person name="Rubin G.M."/>
            <person name="Hong L."/>
            <person name="Brokstein P."/>
            <person name="Evans-Holm M."/>
            <person name="Frise E."/>
            <person name="Stapleton M."/>
            <person name="Harvey D.A."/>
        </authorList>
    </citation>
    <scope>NUCLEOTIDE SEQUENCE [LARGE SCALE MRNA] (ISOFORM SHORT)</scope>
    <source>
        <strain>Berkeley</strain>
        <tissue>Embryo</tissue>
    </source>
</reference>
<reference key="7">
    <citation type="journal article" date="1986" name="Proc. Natl. Acad. Sci. U.S.A.">
        <title>Homeo box gene expression in anterior and posterior regions of the Drosophila embryo.</title>
        <authorList>
            <person name="Hoey T."/>
            <person name="Doyle H.J."/>
            <person name="Harding K."/>
            <person name="Wedeen C."/>
            <person name="Levine M."/>
        </authorList>
    </citation>
    <scope>NUCLEOTIDE SEQUENCE [GENOMIC DNA] OF 500-567</scope>
    <scope>TISSUE SPECIFICITY</scope>
    <source>
        <strain>Canton-S</strain>
    </source>
</reference>
<proteinExistence type="evidence at protein level"/>
<feature type="chain" id="PRO_0000200262" description="Homeotic protein labial">
    <location>
        <begin position="1"/>
        <end position="635"/>
    </location>
</feature>
<feature type="DNA-binding region" description="Homeobox" evidence="1">
    <location>
        <begin position="507"/>
        <end position="566"/>
    </location>
</feature>
<feature type="region of interest" description="Disordered" evidence="2">
    <location>
        <begin position="1"/>
        <end position="25"/>
    </location>
</feature>
<feature type="region of interest" description="Disordered" evidence="2">
    <location>
        <begin position="39"/>
        <end position="113"/>
    </location>
</feature>
<feature type="region of interest" description="Disordered" evidence="2">
    <location>
        <begin position="127"/>
        <end position="153"/>
    </location>
</feature>
<feature type="region of interest" description="Disordered" evidence="2">
    <location>
        <begin position="287"/>
        <end position="389"/>
    </location>
</feature>
<feature type="region of interest" description="Disordered" evidence="2">
    <location>
        <begin position="584"/>
        <end position="635"/>
    </location>
</feature>
<feature type="compositionally biased region" description="Low complexity" evidence="2">
    <location>
        <begin position="39"/>
        <end position="66"/>
    </location>
</feature>
<feature type="compositionally biased region" description="Low complexity" evidence="2">
    <location>
        <begin position="95"/>
        <end position="111"/>
    </location>
</feature>
<feature type="compositionally biased region" description="Low complexity" evidence="2">
    <location>
        <begin position="129"/>
        <end position="139"/>
    </location>
</feature>
<feature type="compositionally biased region" description="Low complexity" evidence="2">
    <location>
        <begin position="295"/>
        <end position="340"/>
    </location>
</feature>
<feature type="compositionally biased region" description="Polar residues" evidence="2">
    <location>
        <begin position="341"/>
        <end position="352"/>
    </location>
</feature>
<feature type="compositionally biased region" description="Low complexity" evidence="2">
    <location>
        <begin position="358"/>
        <end position="373"/>
    </location>
</feature>
<feature type="compositionally biased region" description="Polar residues" evidence="2">
    <location>
        <begin position="376"/>
        <end position="389"/>
    </location>
</feature>
<feature type="compositionally biased region" description="Low complexity" evidence="2">
    <location>
        <begin position="585"/>
        <end position="604"/>
    </location>
</feature>
<feature type="compositionally biased region" description="Low complexity" evidence="2">
    <location>
        <begin position="617"/>
        <end position="635"/>
    </location>
</feature>
<feature type="splice variant" id="VSP_002397" description="In isoform Short." evidence="5">
    <location>
        <begin position="406"/>
        <end position="411"/>
    </location>
</feature>
<feature type="sequence conflict" description="In Ref. 2." evidence="6" ref="2">
    <original>S</original>
    <variation>A</variation>
    <location>
        <position position="31"/>
    </location>
</feature>
<feature type="sequence conflict" description="In Ref. 2." evidence="6" ref="2">
    <original>P</original>
    <variation>H</variation>
    <location>
        <position position="46"/>
    </location>
</feature>
<feature type="sequence conflict" description="In Ref. 1; CAB57786/CAB57787." evidence="6" ref="1">
    <original>T</original>
    <variation>K</variation>
    <location>
        <position position="139"/>
    </location>
</feature>
<feature type="sequence conflict" description="In Ref. 1; CAA31495/CAB57786/CAB57787." evidence="6" ref="1">
    <original>G</original>
    <variation>D</variation>
    <location>
        <position position="444"/>
    </location>
</feature>
<feature type="sequence conflict" description="In Ref. 1 and 2." evidence="6" ref="1 2">
    <original>N</original>
    <variation>S</variation>
    <location>
        <position position="447"/>
    </location>
</feature>